<reference key="1">
    <citation type="journal article" date="2010" name="Proc. Natl. Acad. Sci. U.S.A.">
        <title>Nitrosopumilus maritimus genome reveals unique mechanisms for nitrification and autotrophy in globally distributed marine crenarchaea.</title>
        <authorList>
            <person name="Walker C.B."/>
            <person name="de la Torre J.R."/>
            <person name="Klotz M.G."/>
            <person name="Urakawa H."/>
            <person name="Pinel N."/>
            <person name="Arp D.J."/>
            <person name="Brochier-Armanet C."/>
            <person name="Chain P.S."/>
            <person name="Chan P.P."/>
            <person name="Gollabgir A."/>
            <person name="Hemp J."/>
            <person name="Hugler M."/>
            <person name="Karr E.A."/>
            <person name="Konneke M."/>
            <person name="Shin M."/>
            <person name="Lawton T.J."/>
            <person name="Lowe T."/>
            <person name="Martens-Habbena W."/>
            <person name="Sayavedra-Soto L.A."/>
            <person name="Lang D."/>
            <person name="Sievert S.M."/>
            <person name="Rosenzweig A.C."/>
            <person name="Manning G."/>
            <person name="Stahl D.A."/>
        </authorList>
    </citation>
    <scope>NUCLEOTIDE SEQUENCE [LARGE SCALE GENOMIC DNA]</scope>
    <source>
        <strain>SCM1</strain>
    </source>
</reference>
<keyword id="KW-0328">Glycosyltransferase</keyword>
<keyword id="KW-0660">Purine salvage</keyword>
<keyword id="KW-1185">Reference proteome</keyword>
<keyword id="KW-0808">Transferase</keyword>
<proteinExistence type="inferred from homology"/>
<evidence type="ECO:0000255" key="1">
    <source>
        <dbReference type="HAMAP-Rule" id="MF_01963"/>
    </source>
</evidence>
<sequence length="263" mass="29043">MEKDVEIGIFGGTGIYDSGLLEDAKEVDIDTPYGKPSDTITVGTFKGRKIAFLPRHGKKHTIPPHMINFKANIWAFKELGVTRIIAPSAVGSLKEELAPGHFVLPTQFLDFTKSRDGSFSEDGRVIHISVADPFCPELQSSITEVTDSLDMNIHKDCTYVCIEGPRFSTKAESKFYRTTGADIIGMTLVPECQLAREAQICYASISTVTDYDVWAEKPVTAKEVLETLSKNVEGTKKILTELIEKIPKDRSCSCAKALEEAEF</sequence>
<name>MTAP_NITMS</name>
<feature type="chain" id="PRO_0000415105" description="S-methyl-5'-thioadenosine phosphorylase">
    <location>
        <begin position="1"/>
        <end position="263"/>
    </location>
</feature>
<feature type="binding site" evidence="1">
    <location>
        <position position="13"/>
    </location>
    <ligand>
        <name>phosphate</name>
        <dbReference type="ChEBI" id="CHEBI:43474"/>
    </ligand>
</feature>
<feature type="binding site" evidence="1">
    <location>
        <begin position="55"/>
        <end position="56"/>
    </location>
    <ligand>
        <name>phosphate</name>
        <dbReference type="ChEBI" id="CHEBI:43474"/>
    </ligand>
</feature>
<feature type="binding site" evidence="1">
    <location>
        <begin position="88"/>
        <end position="89"/>
    </location>
    <ligand>
        <name>phosphate</name>
        <dbReference type="ChEBI" id="CHEBI:43474"/>
    </ligand>
</feature>
<feature type="binding site" evidence="1">
    <location>
        <position position="186"/>
    </location>
    <ligand>
        <name>substrate</name>
    </ligand>
</feature>
<feature type="binding site" evidence="1">
    <location>
        <position position="187"/>
    </location>
    <ligand>
        <name>phosphate</name>
        <dbReference type="ChEBI" id="CHEBI:43474"/>
    </ligand>
</feature>
<feature type="binding site" evidence="1">
    <location>
        <begin position="210"/>
        <end position="212"/>
    </location>
    <ligand>
        <name>substrate</name>
    </ligand>
</feature>
<feature type="site" description="Important for substrate specificity" evidence="1">
    <location>
        <position position="168"/>
    </location>
</feature>
<feature type="site" description="Important for substrate specificity" evidence="1">
    <location>
        <position position="221"/>
    </location>
</feature>
<accession>A9A3N5</accession>
<organism>
    <name type="scientific">Nitrosopumilus maritimus (strain SCM1)</name>
    <dbReference type="NCBI Taxonomy" id="436308"/>
    <lineage>
        <taxon>Archaea</taxon>
        <taxon>Nitrososphaerota</taxon>
        <taxon>Nitrososphaeria</taxon>
        <taxon>Nitrosopumilales</taxon>
        <taxon>Nitrosopumilaceae</taxon>
        <taxon>Nitrosopumilus</taxon>
    </lineage>
</organism>
<protein>
    <recommendedName>
        <fullName evidence="1">S-methyl-5'-thioadenosine phosphorylase</fullName>
        <ecNumber evidence="1">2.4.2.28</ecNumber>
    </recommendedName>
    <alternativeName>
        <fullName evidence="1">5'-methylthioadenosine phosphorylase</fullName>
        <shortName evidence="1">MTA phosphorylase</shortName>
        <shortName evidence="1">MTAP</shortName>
    </alternativeName>
</protein>
<gene>
    <name evidence="1" type="primary">mtnP</name>
    <name type="ordered locus">Nmar_1401</name>
</gene>
<comment type="function">
    <text evidence="1">Catalyzes the reversible phosphorylation of S-methyl-5'-thioadenosine (MTA) to adenine and 5-methylthioribose-1-phosphate. Involved in the breakdown of MTA, a major by-product of polyamine biosynthesis. Responsible for the first step in the methionine salvage pathway after MTA has been generated from S-adenosylmethionine. Has broad substrate specificity with 6-aminopurine nucleosides as preferred substrates.</text>
</comment>
<comment type="catalytic activity">
    <reaction evidence="1">
        <text>S-methyl-5'-thioadenosine + phosphate = 5-(methylsulfanyl)-alpha-D-ribose 1-phosphate + adenine</text>
        <dbReference type="Rhea" id="RHEA:11852"/>
        <dbReference type="ChEBI" id="CHEBI:16708"/>
        <dbReference type="ChEBI" id="CHEBI:17509"/>
        <dbReference type="ChEBI" id="CHEBI:43474"/>
        <dbReference type="ChEBI" id="CHEBI:58533"/>
        <dbReference type="EC" id="2.4.2.28"/>
    </reaction>
</comment>
<comment type="pathway">
    <text evidence="1">Amino-acid biosynthesis; L-methionine biosynthesis via salvage pathway; S-methyl-5-thio-alpha-D-ribose 1-phosphate from S-methyl-5'-thioadenosine (phosphorylase route): step 1/1.</text>
</comment>
<comment type="subunit">
    <text evidence="1">Homohexamer. Dimer of a homotrimer.</text>
</comment>
<comment type="similarity">
    <text evidence="1">Belongs to the PNP/MTAP phosphorylase family. MTAP subfamily.</text>
</comment>
<dbReference type="EC" id="2.4.2.28" evidence="1"/>
<dbReference type="EMBL" id="CP000866">
    <property type="protein sequence ID" value="ABX13297.1"/>
    <property type="molecule type" value="Genomic_DNA"/>
</dbReference>
<dbReference type="RefSeq" id="WP_012215784.1">
    <property type="nucleotide sequence ID" value="NC_010085.1"/>
</dbReference>
<dbReference type="SMR" id="A9A3N5"/>
<dbReference type="FunCoup" id="A9A3N5">
    <property type="interactions" value="187"/>
</dbReference>
<dbReference type="STRING" id="436308.Nmar_1401"/>
<dbReference type="EnsemblBacteria" id="ABX13297">
    <property type="protein sequence ID" value="ABX13297"/>
    <property type="gene ID" value="Nmar_1401"/>
</dbReference>
<dbReference type="GeneID" id="5773440"/>
<dbReference type="KEGG" id="nmr:Nmar_1401"/>
<dbReference type="eggNOG" id="arCOG01327">
    <property type="taxonomic scope" value="Archaea"/>
</dbReference>
<dbReference type="HOGENOM" id="CLU_054456_0_2_2"/>
<dbReference type="InParanoid" id="A9A3N5"/>
<dbReference type="OrthoDB" id="7681at2157"/>
<dbReference type="PhylomeDB" id="A9A3N5"/>
<dbReference type="UniPathway" id="UPA00904">
    <property type="reaction ID" value="UER00873"/>
</dbReference>
<dbReference type="Proteomes" id="UP000000792">
    <property type="component" value="Chromosome"/>
</dbReference>
<dbReference type="GO" id="GO:0005829">
    <property type="term" value="C:cytosol"/>
    <property type="evidence" value="ECO:0000318"/>
    <property type="project" value="GO_Central"/>
</dbReference>
<dbReference type="GO" id="GO:0017061">
    <property type="term" value="F:S-methyl-5-thioadenosine phosphorylase activity"/>
    <property type="evidence" value="ECO:0000318"/>
    <property type="project" value="GO_Central"/>
</dbReference>
<dbReference type="GO" id="GO:0019509">
    <property type="term" value="P:L-methionine salvage from methylthioadenosine"/>
    <property type="evidence" value="ECO:0000318"/>
    <property type="project" value="GO_Central"/>
</dbReference>
<dbReference type="GO" id="GO:0006166">
    <property type="term" value="P:purine ribonucleoside salvage"/>
    <property type="evidence" value="ECO:0007669"/>
    <property type="project" value="UniProtKB-KW"/>
</dbReference>
<dbReference type="CDD" id="cd09010">
    <property type="entry name" value="MTAP_SsMTAPII_like_MTIP"/>
    <property type="match status" value="1"/>
</dbReference>
<dbReference type="FunFam" id="3.40.50.1580:FF:000012">
    <property type="entry name" value="Probable 6-oxopurine nucleoside phosphorylase"/>
    <property type="match status" value="1"/>
</dbReference>
<dbReference type="Gene3D" id="3.40.50.1580">
    <property type="entry name" value="Nucleoside phosphorylase domain"/>
    <property type="match status" value="1"/>
</dbReference>
<dbReference type="HAMAP" id="MF_01963">
    <property type="entry name" value="MTAP"/>
    <property type="match status" value="1"/>
</dbReference>
<dbReference type="InterPro" id="IPR010044">
    <property type="entry name" value="MTAP"/>
</dbReference>
<dbReference type="InterPro" id="IPR000845">
    <property type="entry name" value="Nucleoside_phosphorylase_d"/>
</dbReference>
<dbReference type="InterPro" id="IPR035994">
    <property type="entry name" value="Nucleoside_phosphorylase_sf"/>
</dbReference>
<dbReference type="InterPro" id="IPR018099">
    <property type="entry name" value="Purine_phosphorylase-2_CS"/>
</dbReference>
<dbReference type="NCBIfam" id="TIGR01694">
    <property type="entry name" value="MTAP"/>
    <property type="match status" value="1"/>
</dbReference>
<dbReference type="NCBIfam" id="NF006334">
    <property type="entry name" value="PRK08564.1"/>
    <property type="match status" value="1"/>
</dbReference>
<dbReference type="PANTHER" id="PTHR42679">
    <property type="entry name" value="S-METHYL-5'-THIOADENOSINE PHOSPHORYLASE"/>
    <property type="match status" value="1"/>
</dbReference>
<dbReference type="PANTHER" id="PTHR42679:SF3">
    <property type="entry name" value="S-METHYL-5'-THIOADENOSINE PHOSPHORYLASE"/>
    <property type="match status" value="1"/>
</dbReference>
<dbReference type="Pfam" id="PF01048">
    <property type="entry name" value="PNP_UDP_1"/>
    <property type="match status" value="1"/>
</dbReference>
<dbReference type="SUPFAM" id="SSF53167">
    <property type="entry name" value="Purine and uridine phosphorylases"/>
    <property type="match status" value="1"/>
</dbReference>
<dbReference type="PROSITE" id="PS01240">
    <property type="entry name" value="PNP_MTAP_2"/>
    <property type="match status" value="1"/>
</dbReference>